<evidence type="ECO:0000250" key="1">
    <source>
        <dbReference type="UniProtKB" id="P34022"/>
    </source>
</evidence>
<evidence type="ECO:0000250" key="2">
    <source>
        <dbReference type="UniProtKB" id="P43487"/>
    </source>
</evidence>
<evidence type="ECO:0000255" key="3">
    <source>
        <dbReference type="PROSITE-ProRule" id="PRU00164"/>
    </source>
</evidence>
<evidence type="ECO:0000256" key="4">
    <source>
        <dbReference type="SAM" id="MobiDB-lite"/>
    </source>
</evidence>
<evidence type="ECO:0000305" key="5"/>
<proteinExistence type="evidence at transcript level"/>
<organism>
    <name type="scientific">Bos taurus</name>
    <name type="common">Bovine</name>
    <dbReference type="NCBI Taxonomy" id="9913"/>
    <lineage>
        <taxon>Eukaryota</taxon>
        <taxon>Metazoa</taxon>
        <taxon>Chordata</taxon>
        <taxon>Craniata</taxon>
        <taxon>Vertebrata</taxon>
        <taxon>Euteleostomi</taxon>
        <taxon>Mammalia</taxon>
        <taxon>Eutheria</taxon>
        <taxon>Laurasiatheria</taxon>
        <taxon>Artiodactyla</taxon>
        <taxon>Ruminantia</taxon>
        <taxon>Pecora</taxon>
        <taxon>Bovidae</taxon>
        <taxon>Bovinae</taxon>
        <taxon>Bos</taxon>
    </lineage>
</organism>
<comment type="function">
    <text evidence="1 2">Plays a role in RAN-dependent nucleocytoplasmic transport. Alleviates the TNPO1-dependent inhibition of RAN GTPase activity and mediates the dissociation of RAN from proteins involved in transport into the nucleus (By similarity). Induces a conformation change in the complex formed by XPO1 and RAN that triggers the release of the nuclear export signal of cargo proteins (By similarity). Promotes the disassembly of the complex formed by RAN and importin beta. Promotes dissociation of RAN from a complex with KPNA2 and CSE1L (By similarity). Required for normal mitotic spindle assembly and normal progress through mitosis via its effect on RAN. Does not increase the RAN GTPase activity by itself, but increases GTP hydrolysis mediated by RANGAP1. Inhibits RCC1-dependent exchange of RAN-bound GDP by GTP (By similarity).</text>
</comment>
<comment type="subunit">
    <text evidence="1 2">Interacts with RAN (via C-terminus of GTP-bound form) but not with GDP-bound RAN. Identified in a complex composed of RAN, RANGAP1 and RANBP1 (By similarity). Identified in a complex that contains TNPO1, RAN and RANBP1. Identified in a complex that contains CSE1L, KPNA2, RAN and RANBP1 (By similarity). Identified in a complex with nucleotide-free RAN and RCC1 (By similarity).</text>
</comment>
<comment type="similarity">
    <text evidence="5">Belongs to the RANBP1 family.</text>
</comment>
<name>RANG_BOVIN</name>
<accession>Q3T0M7</accession>
<dbReference type="EMBL" id="BC102327">
    <property type="protein sequence ID" value="AAI02328.1"/>
    <property type="molecule type" value="mRNA"/>
</dbReference>
<dbReference type="RefSeq" id="NP_001029758.1">
    <property type="nucleotide sequence ID" value="NM_001034586.1"/>
</dbReference>
<dbReference type="RefSeq" id="XP_005218370.2">
    <property type="nucleotide sequence ID" value="XM_005218313.3"/>
</dbReference>
<dbReference type="RefSeq" id="XP_015322737.1">
    <property type="nucleotide sequence ID" value="XM_015467251.1"/>
</dbReference>
<dbReference type="SMR" id="Q3T0M7"/>
<dbReference type="FunCoup" id="Q3T0M7">
    <property type="interactions" value="3946"/>
</dbReference>
<dbReference type="STRING" id="9913.ENSBTAP00000008744"/>
<dbReference type="iPTMnet" id="Q3T0M7"/>
<dbReference type="PaxDb" id="9913-ENSBTAP00000054069"/>
<dbReference type="PeptideAtlas" id="Q3T0M7"/>
<dbReference type="Ensembl" id="ENSBTAT00000123734.1">
    <property type="protein sequence ID" value="ENSBTAP00000102019.1"/>
    <property type="gene ID" value="ENSBTAG00000006656.7"/>
</dbReference>
<dbReference type="GeneID" id="533251"/>
<dbReference type="KEGG" id="bta:533251"/>
<dbReference type="CTD" id="5902"/>
<dbReference type="VEuPathDB" id="HostDB:ENSBTAG00000006656"/>
<dbReference type="VGNC" id="VGNC:106890">
    <property type="gene designation" value="RANBP1"/>
</dbReference>
<dbReference type="eggNOG" id="KOG0864">
    <property type="taxonomic scope" value="Eukaryota"/>
</dbReference>
<dbReference type="GeneTree" id="ENSGT00900000141073"/>
<dbReference type="InParanoid" id="Q3T0M7"/>
<dbReference type="OMA" id="NFKDSFM"/>
<dbReference type="OrthoDB" id="2357150at2759"/>
<dbReference type="Proteomes" id="UP000009136">
    <property type="component" value="Chromosome 17"/>
</dbReference>
<dbReference type="Bgee" id="ENSBTAG00000006656">
    <property type="expression patterns" value="Expressed in pharyngeal tonsil and 108 other cell types or tissues"/>
</dbReference>
<dbReference type="GO" id="GO:0005813">
    <property type="term" value="C:centrosome"/>
    <property type="evidence" value="ECO:0000318"/>
    <property type="project" value="GO_Central"/>
</dbReference>
<dbReference type="GO" id="GO:0005737">
    <property type="term" value="C:cytoplasm"/>
    <property type="evidence" value="ECO:0000318"/>
    <property type="project" value="GO_Central"/>
</dbReference>
<dbReference type="GO" id="GO:0005643">
    <property type="term" value="C:nuclear pore"/>
    <property type="evidence" value="ECO:0000318"/>
    <property type="project" value="GO_Central"/>
</dbReference>
<dbReference type="GO" id="GO:0005096">
    <property type="term" value="F:GTPase activator activity"/>
    <property type="evidence" value="ECO:0007669"/>
    <property type="project" value="UniProtKB-KW"/>
</dbReference>
<dbReference type="GO" id="GO:0006913">
    <property type="term" value="P:nucleocytoplasmic transport"/>
    <property type="evidence" value="ECO:0007669"/>
    <property type="project" value="InterPro"/>
</dbReference>
<dbReference type="GO" id="GO:0046604">
    <property type="term" value="P:positive regulation of mitotic centrosome separation"/>
    <property type="evidence" value="ECO:0000318"/>
    <property type="project" value="GO_Central"/>
</dbReference>
<dbReference type="CDD" id="cd13179">
    <property type="entry name" value="RanBD_RanBP1"/>
    <property type="match status" value="1"/>
</dbReference>
<dbReference type="FunFam" id="2.30.29.30:FF:000824">
    <property type="entry name" value="Ran-specific GTPase-activating protein"/>
    <property type="match status" value="1"/>
</dbReference>
<dbReference type="Gene3D" id="2.30.29.30">
    <property type="entry name" value="Pleckstrin-homology domain (PH domain)/Phosphotyrosine-binding domain (PTB)"/>
    <property type="match status" value="1"/>
</dbReference>
<dbReference type="InterPro" id="IPR011993">
    <property type="entry name" value="PH-like_dom_sf"/>
</dbReference>
<dbReference type="InterPro" id="IPR000156">
    <property type="entry name" value="Ran_bind_dom"/>
</dbReference>
<dbReference type="InterPro" id="IPR045255">
    <property type="entry name" value="RanBP1-like"/>
</dbReference>
<dbReference type="InterPro" id="IPR045256">
    <property type="entry name" value="RanBP1_RanBD"/>
</dbReference>
<dbReference type="PANTHER" id="PTHR23138">
    <property type="entry name" value="RAN BINDING PROTEIN"/>
    <property type="match status" value="1"/>
</dbReference>
<dbReference type="PANTHER" id="PTHR23138:SF182">
    <property type="entry name" value="RAN-SPECIFIC GTPASE-ACTIVATING PROTEIN"/>
    <property type="match status" value="1"/>
</dbReference>
<dbReference type="Pfam" id="PF00638">
    <property type="entry name" value="Ran_BP1"/>
    <property type="match status" value="1"/>
</dbReference>
<dbReference type="SMART" id="SM00160">
    <property type="entry name" value="RanBD"/>
    <property type="match status" value="1"/>
</dbReference>
<dbReference type="SUPFAM" id="SSF50729">
    <property type="entry name" value="PH domain-like"/>
    <property type="match status" value="1"/>
</dbReference>
<dbReference type="PROSITE" id="PS50196">
    <property type="entry name" value="RANBD1"/>
    <property type="match status" value="1"/>
</dbReference>
<reference key="1">
    <citation type="submission" date="2005-08" db="EMBL/GenBank/DDBJ databases">
        <authorList>
            <consortium name="NIH - Mammalian Gene Collection (MGC) project"/>
        </authorList>
    </citation>
    <scope>NUCLEOTIDE SEQUENCE [LARGE SCALE MRNA]</scope>
    <source>
        <strain>Crossbred X Angus</strain>
        <tissue>Ileum</tissue>
    </source>
</reference>
<sequence length="206" mass="23712">MAAAKDTHEDHDTSTENADESNHDPQFEPIVSLPEQEIKTLEEDEEELFKMRAKLFRFASENDLPEWKERGTGDVKLLKHKEKGTIRLLMRRDKTLKICANHYITPMMELKPNAGSDRAWVWNTHADFADECPKQELLAIRFLNAENAQKFKTKFEECRKEIEEKEKKGSGKNDSTEKVVEKLEALSVQEGEQPQDAAPAAVEEEQ</sequence>
<protein>
    <recommendedName>
        <fullName>Ran-specific GTPase-activating protein</fullName>
    </recommendedName>
    <alternativeName>
        <fullName>Ran-binding protein 1</fullName>
        <shortName>RanBP1</shortName>
    </alternativeName>
</protein>
<gene>
    <name type="primary">RANBP1</name>
</gene>
<feature type="initiator methionine" description="Removed" evidence="2">
    <location>
        <position position="1"/>
    </location>
</feature>
<feature type="chain" id="PRO_0000330895" description="Ran-specific GTPase-activating protein">
    <location>
        <begin position="2"/>
        <end position="206"/>
    </location>
</feature>
<feature type="domain" description="RanBD1" evidence="3">
    <location>
        <begin position="26"/>
        <end position="164"/>
    </location>
</feature>
<feature type="region of interest" description="Disordered" evidence="4">
    <location>
        <begin position="1"/>
        <end position="33"/>
    </location>
</feature>
<feature type="region of interest" description="Disordered" evidence="4">
    <location>
        <begin position="162"/>
        <end position="206"/>
    </location>
</feature>
<feature type="compositionally biased region" description="Basic and acidic residues" evidence="4">
    <location>
        <begin position="1"/>
        <end position="26"/>
    </location>
</feature>
<feature type="compositionally biased region" description="Basic and acidic residues" evidence="4">
    <location>
        <begin position="162"/>
        <end position="184"/>
    </location>
</feature>
<feature type="modified residue" description="N-acetylalanine" evidence="2">
    <location>
        <position position="2"/>
    </location>
</feature>
<feature type="modified residue" description="Phosphothreonine" evidence="2">
    <location>
        <position position="13"/>
    </location>
</feature>
<feature type="modified residue" description="Phosphoserine" evidence="2">
    <location>
        <position position="21"/>
    </location>
</feature>
<feature type="modified residue" description="Phosphoserine" evidence="2">
    <location>
        <position position="60"/>
    </location>
</feature>
<feature type="modified residue" description="N6-acetyllysine; alternate" evidence="2">
    <location>
        <position position="150"/>
    </location>
</feature>
<feature type="modified residue" description="N6-succinyllysine; alternate" evidence="1">
    <location>
        <position position="150"/>
    </location>
</feature>
<feature type="modified residue" description="N6-acetyllysine" evidence="2">
    <location>
        <position position="182"/>
    </location>
</feature>
<feature type="modified residue" description="Phosphoserine" evidence="2">
    <location>
        <position position="187"/>
    </location>
</feature>
<keyword id="KW-0007">Acetylation</keyword>
<keyword id="KW-0343">GTPase activation</keyword>
<keyword id="KW-0597">Phosphoprotein</keyword>
<keyword id="KW-1185">Reference proteome</keyword>